<keyword id="KW-0067">ATP-binding</keyword>
<keyword id="KW-0963">Cytoplasm</keyword>
<keyword id="KW-0418">Kinase</keyword>
<keyword id="KW-0520">NAD</keyword>
<keyword id="KW-0521">NADP</keyword>
<keyword id="KW-0547">Nucleotide-binding</keyword>
<keyword id="KW-0808">Transferase</keyword>
<organism>
    <name type="scientific">Staphylococcus aureus (strain Mu3 / ATCC 700698)</name>
    <dbReference type="NCBI Taxonomy" id="418127"/>
    <lineage>
        <taxon>Bacteria</taxon>
        <taxon>Bacillati</taxon>
        <taxon>Bacillota</taxon>
        <taxon>Bacilli</taxon>
        <taxon>Bacillales</taxon>
        <taxon>Staphylococcaceae</taxon>
        <taxon>Staphylococcus</taxon>
    </lineage>
</organism>
<protein>
    <recommendedName>
        <fullName evidence="1">NAD kinase</fullName>
        <ecNumber evidence="1">2.7.1.23</ecNumber>
    </recommendedName>
    <alternativeName>
        <fullName evidence="1">ATP-dependent NAD kinase</fullName>
    </alternativeName>
</protein>
<proteinExistence type="inferred from homology"/>
<name>NADK_STAA1</name>
<accession>A7X0N2</accession>
<gene>
    <name evidence="1" type="primary">nadK</name>
    <name type="ordered locus">SAHV_1001</name>
</gene>
<sequence length="269" mass="30769">MRYTILTKGDSKSNALKHKMMNYMKDFRMIEDSENPEIVISVGGDGTLLQAFHQYSHMLSKVAFVGVHTGHLGFYADWLPHEVEKLIIEINNSEFQVIEYPLLEIIMRYNDNGYETRYLALNEATMKTENGSTLVVDVNLRGKHFERFRGDGLCVSTPSGSTAYNKALGGALIHPSLEAMQITEIASINNRVFRTVGSPLVLPKHHTCLISPVNHDTIRMTIDHVSIKHKNVNSIQYRVANEKVRFARFRPFPFWKRVHDSFISSDEER</sequence>
<dbReference type="EC" id="2.7.1.23" evidence="1"/>
<dbReference type="EMBL" id="AP009324">
    <property type="protein sequence ID" value="BAF77884.1"/>
    <property type="molecule type" value="Genomic_DNA"/>
</dbReference>
<dbReference type="RefSeq" id="WP_001270834.1">
    <property type="nucleotide sequence ID" value="NZ_CTYB01000001.1"/>
</dbReference>
<dbReference type="SMR" id="A7X0N2"/>
<dbReference type="KEGG" id="saw:SAHV_1001"/>
<dbReference type="HOGENOM" id="CLU_008831_0_3_9"/>
<dbReference type="GO" id="GO:0005737">
    <property type="term" value="C:cytoplasm"/>
    <property type="evidence" value="ECO:0007669"/>
    <property type="project" value="UniProtKB-SubCell"/>
</dbReference>
<dbReference type="GO" id="GO:0005524">
    <property type="term" value="F:ATP binding"/>
    <property type="evidence" value="ECO:0007669"/>
    <property type="project" value="UniProtKB-KW"/>
</dbReference>
<dbReference type="GO" id="GO:0046872">
    <property type="term" value="F:metal ion binding"/>
    <property type="evidence" value="ECO:0007669"/>
    <property type="project" value="UniProtKB-UniRule"/>
</dbReference>
<dbReference type="GO" id="GO:0051287">
    <property type="term" value="F:NAD binding"/>
    <property type="evidence" value="ECO:0007669"/>
    <property type="project" value="UniProtKB-ARBA"/>
</dbReference>
<dbReference type="GO" id="GO:0003951">
    <property type="term" value="F:NAD+ kinase activity"/>
    <property type="evidence" value="ECO:0007669"/>
    <property type="project" value="UniProtKB-UniRule"/>
</dbReference>
<dbReference type="GO" id="GO:0019674">
    <property type="term" value="P:NAD metabolic process"/>
    <property type="evidence" value="ECO:0007669"/>
    <property type="project" value="InterPro"/>
</dbReference>
<dbReference type="GO" id="GO:0006741">
    <property type="term" value="P:NADP biosynthetic process"/>
    <property type="evidence" value="ECO:0007669"/>
    <property type="project" value="UniProtKB-UniRule"/>
</dbReference>
<dbReference type="FunFam" id="2.60.200.30:FF:000002">
    <property type="entry name" value="NAD kinase"/>
    <property type="match status" value="1"/>
</dbReference>
<dbReference type="Gene3D" id="3.40.50.10330">
    <property type="entry name" value="Probable inorganic polyphosphate/atp-NAD kinase, domain 1"/>
    <property type="match status" value="1"/>
</dbReference>
<dbReference type="Gene3D" id="2.60.200.30">
    <property type="entry name" value="Probable inorganic polyphosphate/atp-NAD kinase, domain 2"/>
    <property type="match status" value="1"/>
</dbReference>
<dbReference type="HAMAP" id="MF_00361">
    <property type="entry name" value="NAD_kinase"/>
    <property type="match status" value="1"/>
</dbReference>
<dbReference type="InterPro" id="IPR017438">
    <property type="entry name" value="ATP-NAD_kinase_N"/>
</dbReference>
<dbReference type="InterPro" id="IPR017437">
    <property type="entry name" value="ATP-NAD_kinase_PpnK-typ_C"/>
</dbReference>
<dbReference type="InterPro" id="IPR016064">
    <property type="entry name" value="NAD/diacylglycerol_kinase_sf"/>
</dbReference>
<dbReference type="InterPro" id="IPR002504">
    <property type="entry name" value="NADK"/>
</dbReference>
<dbReference type="NCBIfam" id="NF003424">
    <property type="entry name" value="PRK04885.1"/>
    <property type="match status" value="1"/>
</dbReference>
<dbReference type="PANTHER" id="PTHR20275">
    <property type="entry name" value="NAD KINASE"/>
    <property type="match status" value="1"/>
</dbReference>
<dbReference type="PANTHER" id="PTHR20275:SF0">
    <property type="entry name" value="NAD KINASE"/>
    <property type="match status" value="1"/>
</dbReference>
<dbReference type="Pfam" id="PF01513">
    <property type="entry name" value="NAD_kinase"/>
    <property type="match status" value="1"/>
</dbReference>
<dbReference type="Pfam" id="PF20143">
    <property type="entry name" value="NAD_kinase_C"/>
    <property type="match status" value="1"/>
</dbReference>
<dbReference type="SUPFAM" id="SSF111331">
    <property type="entry name" value="NAD kinase/diacylglycerol kinase-like"/>
    <property type="match status" value="1"/>
</dbReference>
<evidence type="ECO:0000255" key="1">
    <source>
        <dbReference type="HAMAP-Rule" id="MF_00361"/>
    </source>
</evidence>
<comment type="function">
    <text evidence="1">Involved in the regulation of the intracellular balance of NAD and NADP, and is a key enzyme in the biosynthesis of NADP. Catalyzes specifically the phosphorylation on 2'-hydroxyl of the adenosine moiety of NAD to yield NADP.</text>
</comment>
<comment type="catalytic activity">
    <reaction evidence="1">
        <text>NAD(+) + ATP = ADP + NADP(+) + H(+)</text>
        <dbReference type="Rhea" id="RHEA:18629"/>
        <dbReference type="ChEBI" id="CHEBI:15378"/>
        <dbReference type="ChEBI" id="CHEBI:30616"/>
        <dbReference type="ChEBI" id="CHEBI:57540"/>
        <dbReference type="ChEBI" id="CHEBI:58349"/>
        <dbReference type="ChEBI" id="CHEBI:456216"/>
        <dbReference type="EC" id="2.7.1.23"/>
    </reaction>
</comment>
<comment type="cofactor">
    <cofactor evidence="1">
        <name>a divalent metal cation</name>
        <dbReference type="ChEBI" id="CHEBI:60240"/>
    </cofactor>
</comment>
<comment type="subcellular location">
    <subcellularLocation>
        <location evidence="1">Cytoplasm</location>
    </subcellularLocation>
</comment>
<comment type="similarity">
    <text evidence="1">Belongs to the NAD kinase family.</text>
</comment>
<feature type="chain" id="PRO_1000005444" description="NAD kinase">
    <location>
        <begin position="1"/>
        <end position="269"/>
    </location>
</feature>
<feature type="active site" description="Proton acceptor" evidence="1">
    <location>
        <position position="45"/>
    </location>
</feature>
<feature type="binding site" evidence="1">
    <location>
        <begin position="45"/>
        <end position="46"/>
    </location>
    <ligand>
        <name>NAD(+)</name>
        <dbReference type="ChEBI" id="CHEBI:57540"/>
    </ligand>
</feature>
<feature type="binding site" evidence="1">
    <location>
        <begin position="122"/>
        <end position="123"/>
    </location>
    <ligand>
        <name>NAD(+)</name>
        <dbReference type="ChEBI" id="CHEBI:57540"/>
    </ligand>
</feature>
<feature type="binding site" evidence="1">
    <location>
        <position position="149"/>
    </location>
    <ligand>
        <name>NAD(+)</name>
        <dbReference type="ChEBI" id="CHEBI:57540"/>
    </ligand>
</feature>
<feature type="binding site" evidence="1">
    <location>
        <position position="151"/>
    </location>
    <ligand>
        <name>NAD(+)</name>
        <dbReference type="ChEBI" id="CHEBI:57540"/>
    </ligand>
</feature>
<feature type="binding site" evidence="1">
    <location>
        <position position="186"/>
    </location>
    <ligand>
        <name>NAD(+)</name>
        <dbReference type="ChEBI" id="CHEBI:57540"/>
    </ligand>
</feature>
<reference key="1">
    <citation type="journal article" date="2008" name="Antimicrob. Agents Chemother.">
        <title>Mutated response regulator graR is responsible for phenotypic conversion of Staphylococcus aureus from heterogeneous vancomycin-intermediate resistance to vancomycin-intermediate resistance.</title>
        <authorList>
            <person name="Neoh H.-M."/>
            <person name="Cui L."/>
            <person name="Yuzawa H."/>
            <person name="Takeuchi F."/>
            <person name="Matsuo M."/>
            <person name="Hiramatsu K."/>
        </authorList>
    </citation>
    <scope>NUCLEOTIDE SEQUENCE [LARGE SCALE GENOMIC DNA]</scope>
    <source>
        <strain>Mu3 / ATCC 700698</strain>
    </source>
</reference>